<comment type="function">
    <text evidence="1">Catalyzes the conversion of GTP to 2,5-diamino-6-ribosylamino-4(3H)-pyrimidinone 5'-phosphate (DARP), formate and pyrophosphate.</text>
</comment>
<comment type="catalytic activity">
    <reaction evidence="1">
        <text>GTP + 4 H2O = 2,5-diamino-6-hydroxy-4-(5-phosphoribosylamino)-pyrimidine + formate + 2 phosphate + 3 H(+)</text>
        <dbReference type="Rhea" id="RHEA:23704"/>
        <dbReference type="ChEBI" id="CHEBI:15377"/>
        <dbReference type="ChEBI" id="CHEBI:15378"/>
        <dbReference type="ChEBI" id="CHEBI:15740"/>
        <dbReference type="ChEBI" id="CHEBI:37565"/>
        <dbReference type="ChEBI" id="CHEBI:43474"/>
        <dbReference type="ChEBI" id="CHEBI:58614"/>
        <dbReference type="EC" id="3.5.4.25"/>
    </reaction>
</comment>
<comment type="cofactor">
    <cofactor evidence="1">
        <name>Zn(2+)</name>
        <dbReference type="ChEBI" id="CHEBI:29105"/>
    </cofactor>
    <text evidence="1">Binds 1 zinc ion per subunit.</text>
</comment>
<comment type="pathway">
    <text evidence="1">Cofactor biosynthesis; riboflavin biosynthesis; 5-amino-6-(D-ribitylamino)uracil from GTP: step 1/4.</text>
</comment>
<comment type="subunit">
    <text evidence="1">Homodimer.</text>
</comment>
<comment type="similarity">
    <text evidence="1">Belongs to the GTP cyclohydrolase II family.</text>
</comment>
<feature type="chain" id="PRO_1000040590" description="GTP cyclohydrolase-2">
    <location>
        <begin position="1"/>
        <end position="196"/>
    </location>
</feature>
<feature type="active site" description="Proton acceptor" evidence="1">
    <location>
        <position position="126"/>
    </location>
</feature>
<feature type="active site" description="Nucleophile" evidence="1">
    <location>
        <position position="128"/>
    </location>
</feature>
<feature type="binding site" evidence="1">
    <location>
        <begin position="49"/>
        <end position="53"/>
    </location>
    <ligand>
        <name>GTP</name>
        <dbReference type="ChEBI" id="CHEBI:37565"/>
    </ligand>
</feature>
<feature type="binding site" evidence="1">
    <location>
        <position position="54"/>
    </location>
    <ligand>
        <name>Zn(2+)</name>
        <dbReference type="ChEBI" id="CHEBI:29105"/>
        <note>catalytic</note>
    </ligand>
</feature>
<feature type="binding site" evidence="1">
    <location>
        <position position="65"/>
    </location>
    <ligand>
        <name>Zn(2+)</name>
        <dbReference type="ChEBI" id="CHEBI:29105"/>
        <note>catalytic</note>
    </ligand>
</feature>
<feature type="binding site" evidence="1">
    <location>
        <position position="67"/>
    </location>
    <ligand>
        <name>Zn(2+)</name>
        <dbReference type="ChEBI" id="CHEBI:29105"/>
        <note>catalytic</note>
    </ligand>
</feature>
<feature type="binding site" evidence="1">
    <location>
        <position position="70"/>
    </location>
    <ligand>
        <name>GTP</name>
        <dbReference type="ChEBI" id="CHEBI:37565"/>
    </ligand>
</feature>
<feature type="binding site" evidence="1">
    <location>
        <begin position="92"/>
        <end position="94"/>
    </location>
    <ligand>
        <name>GTP</name>
        <dbReference type="ChEBI" id="CHEBI:37565"/>
    </ligand>
</feature>
<feature type="binding site" evidence="1">
    <location>
        <position position="114"/>
    </location>
    <ligand>
        <name>GTP</name>
        <dbReference type="ChEBI" id="CHEBI:37565"/>
    </ligand>
</feature>
<feature type="binding site" evidence="1">
    <location>
        <position position="149"/>
    </location>
    <ligand>
        <name>GTP</name>
        <dbReference type="ChEBI" id="CHEBI:37565"/>
    </ligand>
</feature>
<feature type="binding site" evidence="1">
    <location>
        <position position="154"/>
    </location>
    <ligand>
        <name>GTP</name>
        <dbReference type="ChEBI" id="CHEBI:37565"/>
    </ligand>
</feature>
<gene>
    <name evidence="1" type="primary">ribA</name>
    <name type="ordered locus">SDY_1353</name>
</gene>
<sequence>MQLKRVVEAKLPTPWGDFLMVGFEELATGHDHVALVYGDISGHTPVLARVHSECLTGDALFSLRCDCGFQLEAALTQIAEEGRGILLYHRQEGRNIGLLNKIRAYALQDQGYDTVEANHQLGFAADERDFTLCADMFKLLGVNEVRLLTNNPKKVEILTEAGINIVERVPLIVGRNPNNEHYLDTKAEKMGHLLNK</sequence>
<reference key="1">
    <citation type="journal article" date="2005" name="Nucleic Acids Res.">
        <title>Genome dynamics and diversity of Shigella species, the etiologic agents of bacillary dysentery.</title>
        <authorList>
            <person name="Yang F."/>
            <person name="Yang J."/>
            <person name="Zhang X."/>
            <person name="Chen L."/>
            <person name="Jiang Y."/>
            <person name="Yan Y."/>
            <person name="Tang X."/>
            <person name="Wang J."/>
            <person name="Xiong Z."/>
            <person name="Dong J."/>
            <person name="Xue Y."/>
            <person name="Zhu Y."/>
            <person name="Xu X."/>
            <person name="Sun L."/>
            <person name="Chen S."/>
            <person name="Nie H."/>
            <person name="Peng J."/>
            <person name="Xu J."/>
            <person name="Wang Y."/>
            <person name="Yuan Z."/>
            <person name="Wen Y."/>
            <person name="Yao Z."/>
            <person name="Shen Y."/>
            <person name="Qiang B."/>
            <person name="Hou Y."/>
            <person name="Yu J."/>
            <person name="Jin Q."/>
        </authorList>
    </citation>
    <scope>NUCLEOTIDE SEQUENCE [LARGE SCALE GENOMIC DNA]</scope>
    <source>
        <strain>Sd197</strain>
    </source>
</reference>
<dbReference type="EC" id="3.5.4.25" evidence="1"/>
<dbReference type="EMBL" id="CP000034">
    <property type="protein sequence ID" value="ABB61499.1"/>
    <property type="molecule type" value="Genomic_DNA"/>
</dbReference>
<dbReference type="RefSeq" id="WP_001176302.1">
    <property type="nucleotide sequence ID" value="NC_007606.1"/>
</dbReference>
<dbReference type="RefSeq" id="YP_402990.1">
    <property type="nucleotide sequence ID" value="NC_007606.1"/>
</dbReference>
<dbReference type="SMR" id="Q32GQ6"/>
<dbReference type="STRING" id="300267.SDY_1353"/>
<dbReference type="EnsemblBacteria" id="ABB61499">
    <property type="protein sequence ID" value="ABB61499"/>
    <property type="gene ID" value="SDY_1353"/>
</dbReference>
<dbReference type="KEGG" id="sdy:SDY_1353"/>
<dbReference type="PATRIC" id="fig|300267.13.peg.1603"/>
<dbReference type="HOGENOM" id="CLU_020273_2_1_6"/>
<dbReference type="UniPathway" id="UPA00275">
    <property type="reaction ID" value="UER00400"/>
</dbReference>
<dbReference type="Proteomes" id="UP000002716">
    <property type="component" value="Chromosome"/>
</dbReference>
<dbReference type="GO" id="GO:0005829">
    <property type="term" value="C:cytosol"/>
    <property type="evidence" value="ECO:0007669"/>
    <property type="project" value="TreeGrafter"/>
</dbReference>
<dbReference type="GO" id="GO:0005525">
    <property type="term" value="F:GTP binding"/>
    <property type="evidence" value="ECO:0007669"/>
    <property type="project" value="UniProtKB-KW"/>
</dbReference>
<dbReference type="GO" id="GO:0003935">
    <property type="term" value="F:GTP cyclohydrolase II activity"/>
    <property type="evidence" value="ECO:0007669"/>
    <property type="project" value="UniProtKB-UniRule"/>
</dbReference>
<dbReference type="GO" id="GO:0008270">
    <property type="term" value="F:zinc ion binding"/>
    <property type="evidence" value="ECO:0007669"/>
    <property type="project" value="UniProtKB-UniRule"/>
</dbReference>
<dbReference type="GO" id="GO:0009231">
    <property type="term" value="P:riboflavin biosynthetic process"/>
    <property type="evidence" value="ECO:0007669"/>
    <property type="project" value="UniProtKB-UniRule"/>
</dbReference>
<dbReference type="CDD" id="cd00641">
    <property type="entry name" value="GTP_cyclohydro2"/>
    <property type="match status" value="1"/>
</dbReference>
<dbReference type="FunFam" id="3.40.50.10990:FF:000002">
    <property type="entry name" value="GTP cyclohydrolase-2"/>
    <property type="match status" value="1"/>
</dbReference>
<dbReference type="Gene3D" id="3.40.50.10990">
    <property type="entry name" value="GTP cyclohydrolase II"/>
    <property type="match status" value="1"/>
</dbReference>
<dbReference type="HAMAP" id="MF_00179">
    <property type="entry name" value="RibA"/>
    <property type="match status" value="1"/>
</dbReference>
<dbReference type="InterPro" id="IPR032677">
    <property type="entry name" value="GTP_cyclohydro_II"/>
</dbReference>
<dbReference type="InterPro" id="IPR000926">
    <property type="entry name" value="RibA"/>
</dbReference>
<dbReference type="InterPro" id="IPR036144">
    <property type="entry name" value="RibA-like_sf"/>
</dbReference>
<dbReference type="NCBIfam" id="NF001591">
    <property type="entry name" value="PRK00393.1"/>
    <property type="match status" value="1"/>
</dbReference>
<dbReference type="NCBIfam" id="TIGR00505">
    <property type="entry name" value="ribA"/>
    <property type="match status" value="1"/>
</dbReference>
<dbReference type="PANTHER" id="PTHR21327:SF18">
    <property type="entry name" value="3,4-DIHYDROXY-2-BUTANONE 4-PHOSPHATE SYNTHASE"/>
    <property type="match status" value="1"/>
</dbReference>
<dbReference type="PANTHER" id="PTHR21327">
    <property type="entry name" value="GTP CYCLOHYDROLASE II-RELATED"/>
    <property type="match status" value="1"/>
</dbReference>
<dbReference type="Pfam" id="PF00925">
    <property type="entry name" value="GTP_cyclohydro2"/>
    <property type="match status" value="1"/>
</dbReference>
<dbReference type="SUPFAM" id="SSF142695">
    <property type="entry name" value="RibA-like"/>
    <property type="match status" value="1"/>
</dbReference>
<evidence type="ECO:0000255" key="1">
    <source>
        <dbReference type="HAMAP-Rule" id="MF_00179"/>
    </source>
</evidence>
<organism>
    <name type="scientific">Shigella dysenteriae serotype 1 (strain Sd197)</name>
    <dbReference type="NCBI Taxonomy" id="300267"/>
    <lineage>
        <taxon>Bacteria</taxon>
        <taxon>Pseudomonadati</taxon>
        <taxon>Pseudomonadota</taxon>
        <taxon>Gammaproteobacteria</taxon>
        <taxon>Enterobacterales</taxon>
        <taxon>Enterobacteriaceae</taxon>
        <taxon>Shigella</taxon>
    </lineage>
</organism>
<keyword id="KW-0342">GTP-binding</keyword>
<keyword id="KW-0378">Hydrolase</keyword>
<keyword id="KW-0479">Metal-binding</keyword>
<keyword id="KW-0547">Nucleotide-binding</keyword>
<keyword id="KW-1185">Reference proteome</keyword>
<keyword id="KW-0686">Riboflavin biosynthesis</keyword>
<keyword id="KW-0862">Zinc</keyword>
<name>RIBA_SHIDS</name>
<accession>Q32GQ6</accession>
<protein>
    <recommendedName>
        <fullName evidence="1">GTP cyclohydrolase-2</fullName>
        <ecNumber evidence="1">3.5.4.25</ecNumber>
    </recommendedName>
    <alternativeName>
        <fullName evidence="1">GTP cyclohydrolase II</fullName>
    </alternativeName>
</protein>
<proteinExistence type="inferred from homology"/>